<comment type="function">
    <text evidence="4">Histone chaperone that facilitates histone deposition and histone exchange and removal during nucleosome assembly and disassembly.</text>
</comment>
<comment type="subunit">
    <text evidence="1">Interacts with histone H3 and histone H4.</text>
</comment>
<comment type="subcellular location">
    <subcellularLocation>
        <location evidence="5">Nucleus</location>
    </subcellularLocation>
</comment>
<comment type="similarity">
    <text evidence="6">Belongs to the ASF1 family.</text>
</comment>
<keyword id="KW-0002">3D-structure</keyword>
<keyword id="KW-0143">Chaperone</keyword>
<keyword id="KW-0156">Chromatin regulator</keyword>
<keyword id="KW-0175">Coiled coil</keyword>
<keyword id="KW-0539">Nucleus</keyword>
<keyword id="KW-1185">Reference proteome</keyword>
<keyword id="KW-0804">Transcription</keyword>
<keyword id="KW-0805">Transcription regulation</keyword>
<name>ASF1_SCHPO</name>
<evidence type="ECO:0000250" key="1"/>
<evidence type="ECO:0000255" key="2"/>
<evidence type="ECO:0000256" key="3">
    <source>
        <dbReference type="SAM" id="MobiDB-lite"/>
    </source>
</evidence>
<evidence type="ECO:0000269" key="4">
    <source>
    </source>
</evidence>
<evidence type="ECO:0000269" key="5">
    <source>
    </source>
</evidence>
<evidence type="ECO:0000305" key="6"/>
<evidence type="ECO:0007829" key="7">
    <source>
        <dbReference type="PDB" id="2CU9"/>
    </source>
</evidence>
<evidence type="ECO:0007829" key="8">
    <source>
        <dbReference type="PDB" id="2Z3F"/>
    </source>
</evidence>
<organism>
    <name type="scientific">Schizosaccharomyces pombe (strain 972 / ATCC 24843)</name>
    <name type="common">Fission yeast</name>
    <dbReference type="NCBI Taxonomy" id="284812"/>
    <lineage>
        <taxon>Eukaryota</taxon>
        <taxon>Fungi</taxon>
        <taxon>Dikarya</taxon>
        <taxon>Ascomycota</taxon>
        <taxon>Taphrinomycotina</taxon>
        <taxon>Schizosaccharomycetes</taxon>
        <taxon>Schizosaccharomycetales</taxon>
        <taxon>Schizosaccharomycetaceae</taxon>
        <taxon>Schizosaccharomyces</taxon>
    </lineage>
</organism>
<protein>
    <recommendedName>
        <fullName>Histone chaperone cia1</fullName>
    </recommendedName>
    <alternativeName>
        <fullName>Anti-silencing function protein 1</fullName>
    </alternativeName>
</protein>
<reference key="1">
    <citation type="journal article" date="2002" name="Genes Cells">
        <title>Polyanionic stretch-deleted histone chaperone cia1/Asf1p is functional both in vivo and in vitro.</title>
        <authorList>
            <person name="Umehara T."/>
            <person name="Chimura T."/>
            <person name="Ichikawa N."/>
            <person name="Horikoshi M."/>
        </authorList>
    </citation>
    <scope>NUCLEOTIDE SEQUENCE [GENOMIC DNA]</scope>
    <scope>FUNCTION</scope>
</reference>
<reference key="2">
    <citation type="journal article" date="2002" name="Nature">
        <title>The genome sequence of Schizosaccharomyces pombe.</title>
        <authorList>
            <person name="Wood V."/>
            <person name="Gwilliam R."/>
            <person name="Rajandream M.A."/>
            <person name="Lyne M.H."/>
            <person name="Lyne R."/>
            <person name="Stewart A."/>
            <person name="Sgouros J.G."/>
            <person name="Peat N."/>
            <person name="Hayles J."/>
            <person name="Baker S.G."/>
            <person name="Basham D."/>
            <person name="Bowman S."/>
            <person name="Brooks K."/>
            <person name="Brown D."/>
            <person name="Brown S."/>
            <person name="Chillingworth T."/>
            <person name="Churcher C.M."/>
            <person name="Collins M."/>
            <person name="Connor R."/>
            <person name="Cronin A."/>
            <person name="Davis P."/>
            <person name="Feltwell T."/>
            <person name="Fraser A."/>
            <person name="Gentles S."/>
            <person name="Goble A."/>
            <person name="Hamlin N."/>
            <person name="Harris D.E."/>
            <person name="Hidalgo J."/>
            <person name="Hodgson G."/>
            <person name="Holroyd S."/>
            <person name="Hornsby T."/>
            <person name="Howarth S."/>
            <person name="Huckle E.J."/>
            <person name="Hunt S."/>
            <person name="Jagels K."/>
            <person name="James K.D."/>
            <person name="Jones L."/>
            <person name="Jones M."/>
            <person name="Leather S."/>
            <person name="McDonald S."/>
            <person name="McLean J."/>
            <person name="Mooney P."/>
            <person name="Moule S."/>
            <person name="Mungall K.L."/>
            <person name="Murphy L.D."/>
            <person name="Niblett D."/>
            <person name="Odell C."/>
            <person name="Oliver K."/>
            <person name="O'Neil S."/>
            <person name="Pearson D."/>
            <person name="Quail M.A."/>
            <person name="Rabbinowitsch E."/>
            <person name="Rutherford K.M."/>
            <person name="Rutter S."/>
            <person name="Saunders D."/>
            <person name="Seeger K."/>
            <person name="Sharp S."/>
            <person name="Skelton J."/>
            <person name="Simmonds M.N."/>
            <person name="Squares R."/>
            <person name="Squares S."/>
            <person name="Stevens K."/>
            <person name="Taylor K."/>
            <person name="Taylor R.G."/>
            <person name="Tivey A."/>
            <person name="Walsh S.V."/>
            <person name="Warren T."/>
            <person name="Whitehead S."/>
            <person name="Woodward J.R."/>
            <person name="Volckaert G."/>
            <person name="Aert R."/>
            <person name="Robben J."/>
            <person name="Grymonprez B."/>
            <person name="Weltjens I."/>
            <person name="Vanstreels E."/>
            <person name="Rieger M."/>
            <person name="Schaefer M."/>
            <person name="Mueller-Auer S."/>
            <person name="Gabel C."/>
            <person name="Fuchs M."/>
            <person name="Duesterhoeft A."/>
            <person name="Fritzc C."/>
            <person name="Holzer E."/>
            <person name="Moestl D."/>
            <person name="Hilbert H."/>
            <person name="Borzym K."/>
            <person name="Langer I."/>
            <person name="Beck A."/>
            <person name="Lehrach H."/>
            <person name="Reinhardt R."/>
            <person name="Pohl T.M."/>
            <person name="Eger P."/>
            <person name="Zimmermann W."/>
            <person name="Wedler H."/>
            <person name="Wambutt R."/>
            <person name="Purnelle B."/>
            <person name="Goffeau A."/>
            <person name="Cadieu E."/>
            <person name="Dreano S."/>
            <person name="Gloux S."/>
            <person name="Lelaure V."/>
            <person name="Mottier S."/>
            <person name="Galibert F."/>
            <person name="Aves S.J."/>
            <person name="Xiang Z."/>
            <person name="Hunt C."/>
            <person name="Moore K."/>
            <person name="Hurst S.M."/>
            <person name="Lucas M."/>
            <person name="Rochet M."/>
            <person name="Gaillardin C."/>
            <person name="Tallada V.A."/>
            <person name="Garzon A."/>
            <person name="Thode G."/>
            <person name="Daga R.R."/>
            <person name="Cruzado L."/>
            <person name="Jimenez J."/>
            <person name="Sanchez M."/>
            <person name="del Rey F."/>
            <person name="Benito J."/>
            <person name="Dominguez A."/>
            <person name="Revuelta J.L."/>
            <person name="Moreno S."/>
            <person name="Armstrong J."/>
            <person name="Forsburg S.L."/>
            <person name="Cerutti L."/>
            <person name="Lowe T."/>
            <person name="McCombie W.R."/>
            <person name="Paulsen I."/>
            <person name="Potashkin J."/>
            <person name="Shpakovski G.V."/>
            <person name="Ussery D."/>
            <person name="Barrell B.G."/>
            <person name="Nurse P."/>
        </authorList>
    </citation>
    <scope>NUCLEOTIDE SEQUENCE [LARGE SCALE GENOMIC DNA]</scope>
    <source>
        <strain>972 / ATCC 24843</strain>
    </source>
</reference>
<reference key="3">
    <citation type="journal article" date="2006" name="Nat. Biotechnol.">
        <title>ORFeome cloning and global analysis of protein localization in the fission yeast Schizosaccharomyces pombe.</title>
        <authorList>
            <person name="Matsuyama A."/>
            <person name="Arai R."/>
            <person name="Yashiroda Y."/>
            <person name="Shirai A."/>
            <person name="Kamata A."/>
            <person name="Sekido S."/>
            <person name="Kobayashi Y."/>
            <person name="Hashimoto A."/>
            <person name="Hamamoto M."/>
            <person name="Hiraoka Y."/>
            <person name="Horinouchi S."/>
            <person name="Yoshida M."/>
        </authorList>
    </citation>
    <scope>SUBCELLULAR LOCATION [LARGE SCALE ANALYSIS]</scope>
</reference>
<dbReference type="EMBL" id="AB031397">
    <property type="protein sequence ID" value="BAB82475.1"/>
    <property type="molecule type" value="Genomic_DNA"/>
</dbReference>
<dbReference type="EMBL" id="CU329672">
    <property type="protein sequence ID" value="CAA20365.1"/>
    <property type="molecule type" value="Genomic_DNA"/>
</dbReference>
<dbReference type="PIR" id="T41536">
    <property type="entry name" value="T41536"/>
</dbReference>
<dbReference type="RefSeq" id="NP_588267.1">
    <property type="nucleotide sequence ID" value="NM_001023257.2"/>
</dbReference>
<dbReference type="PDB" id="2CU9">
    <property type="method" value="X-ray"/>
    <property type="resolution" value="1.80 A"/>
    <property type="chains" value="A=1-161"/>
</dbReference>
<dbReference type="PDB" id="2DZE">
    <property type="method" value="X-ray"/>
    <property type="resolution" value="1.80 A"/>
    <property type="chains" value="A/B=1-161"/>
</dbReference>
<dbReference type="PDB" id="2Z34">
    <property type="method" value="X-ray"/>
    <property type="resolution" value="2.40 A"/>
    <property type="chains" value="A/B=1-161"/>
</dbReference>
<dbReference type="PDB" id="2Z3F">
    <property type="method" value="X-ray"/>
    <property type="resolution" value="2.70 A"/>
    <property type="chains" value="A/B/C/D/E/F/G/H=1-161"/>
</dbReference>
<dbReference type="PDBsum" id="2CU9"/>
<dbReference type="PDBsum" id="2DZE"/>
<dbReference type="PDBsum" id="2Z34"/>
<dbReference type="PDBsum" id="2Z3F"/>
<dbReference type="SMR" id="O74515"/>
<dbReference type="BioGRID" id="276128">
    <property type="interactions" value="75"/>
</dbReference>
<dbReference type="FunCoup" id="O74515">
    <property type="interactions" value="652"/>
</dbReference>
<dbReference type="STRING" id="284812.O74515"/>
<dbReference type="iPTMnet" id="O74515"/>
<dbReference type="PaxDb" id="4896-SPCC663.05c.1"/>
<dbReference type="EnsemblFungi" id="SPCC663.05c.1">
    <property type="protein sequence ID" value="SPCC663.05c.1:pep"/>
    <property type="gene ID" value="SPCC663.05c"/>
</dbReference>
<dbReference type="GeneID" id="2539568"/>
<dbReference type="KEGG" id="spo:2539568"/>
<dbReference type="PomBase" id="SPCC663.05c">
    <property type="gene designation" value="cia1"/>
</dbReference>
<dbReference type="VEuPathDB" id="FungiDB:SPCC663.05c"/>
<dbReference type="eggNOG" id="KOG3265">
    <property type="taxonomic scope" value="Eukaryota"/>
</dbReference>
<dbReference type="HOGENOM" id="CLU_060354_0_2_1"/>
<dbReference type="InParanoid" id="O74515"/>
<dbReference type="OMA" id="CSYDERE"/>
<dbReference type="PhylomeDB" id="O74515"/>
<dbReference type="EvolutionaryTrace" id="O74515"/>
<dbReference type="PRO" id="PR:O74515"/>
<dbReference type="Proteomes" id="UP000002485">
    <property type="component" value="Chromosome III"/>
</dbReference>
<dbReference type="GO" id="GO:0000785">
    <property type="term" value="C:chromatin"/>
    <property type="evidence" value="ECO:0000318"/>
    <property type="project" value="GO_Central"/>
</dbReference>
<dbReference type="GO" id="GO:0005634">
    <property type="term" value="C:nucleus"/>
    <property type="evidence" value="ECO:0000314"/>
    <property type="project" value="PomBase"/>
</dbReference>
<dbReference type="GO" id="GO:0000510">
    <property type="term" value="F:H3-H4 histone complex chaperone activity"/>
    <property type="evidence" value="ECO:0000303"/>
    <property type="project" value="PomBase"/>
</dbReference>
<dbReference type="GO" id="GO:0042393">
    <property type="term" value="F:histone binding"/>
    <property type="evidence" value="ECO:0000318"/>
    <property type="project" value="GO_Central"/>
</dbReference>
<dbReference type="GO" id="GO:0140713">
    <property type="term" value="F:histone chaperone activity"/>
    <property type="evidence" value="ECO:0000269"/>
    <property type="project" value="PomBase"/>
</dbReference>
<dbReference type="GO" id="GO:0006325">
    <property type="term" value="P:chromatin organization"/>
    <property type="evidence" value="ECO:0000315"/>
    <property type="project" value="PomBase"/>
</dbReference>
<dbReference type="GO" id="GO:0006335">
    <property type="term" value="P:DNA replication-dependent chromatin assembly"/>
    <property type="evidence" value="ECO:0000318"/>
    <property type="project" value="GO_Central"/>
</dbReference>
<dbReference type="GO" id="GO:0006334">
    <property type="term" value="P:nucleosome assembly"/>
    <property type="evidence" value="ECO:0007669"/>
    <property type="project" value="InterPro"/>
</dbReference>
<dbReference type="GO" id="GO:0006337">
    <property type="term" value="P:nucleosome disassembly"/>
    <property type="evidence" value="ECO:0007669"/>
    <property type="project" value="InterPro"/>
</dbReference>
<dbReference type="GO" id="GO:0045815">
    <property type="term" value="P:transcription initiation-coupled chromatin remodeling"/>
    <property type="evidence" value="ECO:0000269"/>
    <property type="project" value="PomBase"/>
</dbReference>
<dbReference type="FunFam" id="2.60.40.1490:FF:000001">
    <property type="entry name" value="Histone chaperone ASF1"/>
    <property type="match status" value="1"/>
</dbReference>
<dbReference type="Gene3D" id="2.60.40.1490">
    <property type="entry name" value="Histone chaperone ASF1-like"/>
    <property type="match status" value="1"/>
</dbReference>
<dbReference type="IDEAL" id="IID50258"/>
<dbReference type="InterPro" id="IPR006818">
    <property type="entry name" value="ASF1-like"/>
</dbReference>
<dbReference type="InterPro" id="IPR036747">
    <property type="entry name" value="ASF1-like_sf"/>
</dbReference>
<dbReference type="InterPro" id="IPR017282">
    <property type="entry name" value="Hist_deposition_Asf1"/>
</dbReference>
<dbReference type="PANTHER" id="PTHR12040">
    <property type="entry name" value="ANTI-SILENCING PROTEIN 1"/>
    <property type="match status" value="1"/>
</dbReference>
<dbReference type="PANTHER" id="PTHR12040:SF0">
    <property type="entry name" value="HISTONE CHAPERONE ASF1"/>
    <property type="match status" value="1"/>
</dbReference>
<dbReference type="Pfam" id="PF04729">
    <property type="entry name" value="ASF1_hist_chap"/>
    <property type="match status" value="1"/>
</dbReference>
<dbReference type="PIRSF" id="PIRSF037759">
    <property type="entry name" value="Histone_Asf1"/>
    <property type="match status" value="1"/>
</dbReference>
<dbReference type="SUPFAM" id="SSF101546">
    <property type="entry name" value="ASF1-like"/>
    <property type="match status" value="1"/>
</dbReference>
<sequence length="262" mass="29431">MSIVNILSVNVLNNPAKFSDPYKFEITFECLEPLKSDLEWKLTYVGSATSQSYDQILDTLLVGPIPIGINKFVFEADPPNIDLLPQLSDVLGVTVILLSCAYEDNEFVRVGYYVNNEMEGLNLQEMDDAEIKKVKVDISKVWRSILAEKPRVTRFNIQWDNPDFDDAPPVQPDADEEEEEEEADEMEEEFDEEGEGDEEEEEEDDGDGDGEGDGDGEGENDGKGSEEEEEEEIDIEEEEEESALANASAAEEKPEEKPETSQ</sequence>
<proteinExistence type="evidence at protein level"/>
<gene>
    <name type="primary">cia1</name>
    <name type="synonym">asf1</name>
    <name type="ORF">SPCC663.05c</name>
</gene>
<feature type="chain" id="PRO_0000089743" description="Histone chaperone cia1">
    <location>
        <begin position="1"/>
        <end position="262"/>
    </location>
</feature>
<feature type="region of interest" description="Disordered" evidence="3">
    <location>
        <begin position="157"/>
        <end position="262"/>
    </location>
</feature>
<feature type="coiled-coil region" evidence="2">
    <location>
        <begin position="173"/>
        <end position="196"/>
    </location>
</feature>
<feature type="coiled-coil region" evidence="2">
    <location>
        <begin position="223"/>
        <end position="253"/>
    </location>
</feature>
<feature type="compositionally biased region" description="Acidic residues" evidence="3">
    <location>
        <begin position="173"/>
        <end position="219"/>
    </location>
</feature>
<feature type="compositionally biased region" description="Acidic residues" evidence="3">
    <location>
        <begin position="226"/>
        <end position="242"/>
    </location>
</feature>
<feature type="compositionally biased region" description="Basic and acidic residues" evidence="3">
    <location>
        <begin position="250"/>
        <end position="262"/>
    </location>
</feature>
<feature type="strand" evidence="7">
    <location>
        <begin position="3"/>
        <end position="13"/>
    </location>
</feature>
<feature type="strand" evidence="7">
    <location>
        <begin position="15"/>
        <end position="17"/>
    </location>
</feature>
<feature type="strand" evidence="7">
    <location>
        <begin position="22"/>
        <end position="30"/>
    </location>
</feature>
<feature type="strand" evidence="7">
    <location>
        <begin position="38"/>
        <end position="47"/>
    </location>
</feature>
<feature type="helix" evidence="8">
    <location>
        <begin position="51"/>
        <end position="53"/>
    </location>
</feature>
<feature type="strand" evidence="7">
    <location>
        <begin position="54"/>
        <end position="62"/>
    </location>
</feature>
<feature type="strand" evidence="7">
    <location>
        <begin position="67"/>
        <end position="76"/>
    </location>
</feature>
<feature type="helix" evidence="7">
    <location>
        <begin position="81"/>
        <end position="83"/>
    </location>
</feature>
<feature type="strand" evidence="8">
    <location>
        <begin position="84"/>
        <end position="86"/>
    </location>
</feature>
<feature type="helix" evidence="7">
    <location>
        <begin position="87"/>
        <end position="90"/>
    </location>
</feature>
<feature type="strand" evidence="7">
    <location>
        <begin position="91"/>
        <end position="102"/>
    </location>
</feature>
<feature type="strand" evidence="7">
    <location>
        <begin position="105"/>
        <end position="118"/>
    </location>
</feature>
<feature type="helix" evidence="7">
    <location>
        <begin position="123"/>
        <end position="125"/>
    </location>
</feature>
<feature type="helix" evidence="7">
    <location>
        <begin position="128"/>
        <end position="131"/>
    </location>
</feature>
<feature type="helix" evidence="7">
    <location>
        <begin position="138"/>
        <end position="140"/>
    </location>
</feature>
<feature type="strand" evidence="7">
    <location>
        <begin position="141"/>
        <end position="145"/>
    </location>
</feature>
<feature type="strand" evidence="7">
    <location>
        <begin position="151"/>
        <end position="154"/>
    </location>
</feature>
<accession>O74515</accession>